<dbReference type="EMBL" id="AF052151">
    <property type="status" value="NOT_ANNOTATED_CDS"/>
    <property type="molecule type" value="mRNA"/>
</dbReference>
<dbReference type="EMBL" id="AP001362">
    <property type="status" value="NOT_ANNOTATED_CDS"/>
    <property type="molecule type" value="Genomic_DNA"/>
</dbReference>
<dbReference type="EMBL" id="BC023991">
    <property type="protein sequence ID" value="AAH23991.1"/>
    <property type="molecule type" value="mRNA"/>
</dbReference>
<dbReference type="EMBL" id="BC032373">
    <property type="protein sequence ID" value="AAH32373.1"/>
    <property type="molecule type" value="mRNA"/>
</dbReference>
<dbReference type="EMBL" id="BM557093">
    <property type="status" value="NOT_ANNOTATED_CDS"/>
    <property type="molecule type" value="mRNA"/>
</dbReference>
<dbReference type="CCDS" id="CCDS44648.1">
    <molecule id="Q8N5H3-4"/>
</dbReference>
<dbReference type="CCDS" id="CCDS53662.1">
    <molecule id="Q8N5H3-3"/>
</dbReference>
<dbReference type="CCDS" id="CCDS8105.1">
    <molecule id="Q8N5H3-1"/>
</dbReference>
<dbReference type="RefSeq" id="NP_001092254.1">
    <molecule id="Q8N5H3-4"/>
    <property type="nucleotide sequence ID" value="NM_001098784.2"/>
</dbReference>
<dbReference type="RefSeq" id="NP_001092255.1">
    <molecule id="Q8N5H3-3"/>
    <property type="nucleotide sequence ID" value="NM_001098785.2"/>
</dbReference>
<dbReference type="RefSeq" id="NP_690045.1">
    <molecule id="Q8N5H3-1"/>
    <property type="nucleotide sequence ID" value="NM_152832.3"/>
</dbReference>
<dbReference type="SMR" id="Q8N5H3"/>
<dbReference type="BioGRID" id="117157">
    <property type="interactions" value="8"/>
</dbReference>
<dbReference type="FunCoup" id="Q8N5H3">
    <property type="interactions" value="28"/>
</dbReference>
<dbReference type="IntAct" id="Q8N5H3">
    <property type="interactions" value="6"/>
</dbReference>
<dbReference type="STRING" id="9606.ENSP00000431459"/>
<dbReference type="iPTMnet" id="Q8N5H3"/>
<dbReference type="PhosphoSitePlus" id="Q8N5H3"/>
<dbReference type="BioMuta" id="FAM89B"/>
<dbReference type="DMDM" id="449081271"/>
<dbReference type="jPOST" id="Q8N5H3"/>
<dbReference type="MassIVE" id="Q8N5H3"/>
<dbReference type="PaxDb" id="9606-ENSP00000431459"/>
<dbReference type="PeptideAtlas" id="Q8N5H3"/>
<dbReference type="ProteomicsDB" id="19112"/>
<dbReference type="ProteomicsDB" id="21701"/>
<dbReference type="ProteomicsDB" id="72052">
    <molecule id="Q8N5H3-3"/>
</dbReference>
<dbReference type="ProteomicsDB" id="72053">
    <molecule id="Q8N5H3-2"/>
</dbReference>
<dbReference type="Pumba" id="Q8N5H3"/>
<dbReference type="TopDownProteomics" id="Q8N5H3-1">
    <molecule id="Q8N5H3-1"/>
</dbReference>
<dbReference type="Antibodypedia" id="29851">
    <property type="antibodies" value="88 antibodies from 15 providers"/>
</dbReference>
<dbReference type="DNASU" id="23625"/>
<dbReference type="Ensembl" id="ENST00000316409.2">
    <molecule id="Q8N5H3-1"/>
    <property type="protein sequence ID" value="ENSP00000314829.2"/>
    <property type="gene ID" value="ENSG00000176973.8"/>
</dbReference>
<dbReference type="Ensembl" id="ENST00000449319.2">
    <molecule id="Q8N5H3-4"/>
    <property type="protein sequence ID" value="ENSP00000402439.2"/>
    <property type="gene ID" value="ENSG00000176973.8"/>
</dbReference>
<dbReference type="Ensembl" id="ENST00000530349.2">
    <molecule id="Q8N5H3-3"/>
    <property type="protein sequence ID" value="ENSP00000431459.1"/>
    <property type="gene ID" value="ENSG00000176973.8"/>
</dbReference>
<dbReference type="GeneID" id="23625"/>
<dbReference type="KEGG" id="hsa:23625"/>
<dbReference type="MANE-Select" id="ENST00000530349.2">
    <property type="protein sequence ID" value="ENSP00000431459.1"/>
    <property type="RefSeq nucleotide sequence ID" value="NM_001098785.2"/>
    <property type="RefSeq protein sequence ID" value="NP_001092255.1"/>
</dbReference>
<dbReference type="UCSC" id="uc001oel.3">
    <molecule id="Q8N5H3-3"/>
    <property type="organism name" value="human"/>
</dbReference>
<dbReference type="AGR" id="HGNC:16708"/>
<dbReference type="CTD" id="23625"/>
<dbReference type="GeneCards" id="FAM89B"/>
<dbReference type="HGNC" id="HGNC:16708">
    <property type="gene designation" value="FAM89B"/>
</dbReference>
<dbReference type="HPA" id="ENSG00000176973">
    <property type="expression patterns" value="Low tissue specificity"/>
</dbReference>
<dbReference type="MIM" id="616128">
    <property type="type" value="gene"/>
</dbReference>
<dbReference type="neXtProt" id="NX_Q8N5H3"/>
<dbReference type="OpenTargets" id="ENSG00000176973"/>
<dbReference type="PharmGKB" id="PA142671795"/>
<dbReference type="VEuPathDB" id="HostDB:ENSG00000176973"/>
<dbReference type="eggNOG" id="ENOG502S05U">
    <property type="taxonomic scope" value="Eukaryota"/>
</dbReference>
<dbReference type="GeneTree" id="ENSGT00940000153370"/>
<dbReference type="HOGENOM" id="CLU_1749030_0_0_1"/>
<dbReference type="InParanoid" id="Q8N5H3"/>
<dbReference type="OMA" id="MSLCQDM"/>
<dbReference type="OrthoDB" id="1681166at2759"/>
<dbReference type="PAN-GO" id="Q8N5H3">
    <property type="GO annotations" value="7 GO annotations based on evolutionary models"/>
</dbReference>
<dbReference type="PhylomeDB" id="Q8N5H3"/>
<dbReference type="PathwayCommons" id="Q8N5H3"/>
<dbReference type="BioGRID-ORCS" id="23625">
    <property type="hits" value="45 hits in 1158 CRISPR screens"/>
</dbReference>
<dbReference type="ChiTaRS" id="FAM89B">
    <property type="organism name" value="human"/>
</dbReference>
<dbReference type="GenomeRNAi" id="23625"/>
<dbReference type="Pharos" id="Q8N5H3">
    <property type="development level" value="Tbio"/>
</dbReference>
<dbReference type="PRO" id="PR:Q8N5H3"/>
<dbReference type="Proteomes" id="UP000005640">
    <property type="component" value="Chromosome 11"/>
</dbReference>
<dbReference type="RNAct" id="Q8N5H3">
    <property type="molecule type" value="protein"/>
</dbReference>
<dbReference type="Bgee" id="ENSG00000176973">
    <property type="expression patterns" value="Expressed in cortical plate and 96 other cell types or tissues"/>
</dbReference>
<dbReference type="GO" id="GO:0005737">
    <property type="term" value="C:cytoplasm"/>
    <property type="evidence" value="ECO:0000250"/>
    <property type="project" value="UniProtKB"/>
</dbReference>
<dbReference type="GO" id="GO:0030027">
    <property type="term" value="C:lamellipodium"/>
    <property type="evidence" value="ECO:0000250"/>
    <property type="project" value="UniProtKB"/>
</dbReference>
<dbReference type="GO" id="GO:0001222">
    <property type="term" value="F:transcription corepressor binding"/>
    <property type="evidence" value="ECO:0000250"/>
    <property type="project" value="UniProtKB"/>
</dbReference>
<dbReference type="GO" id="GO:0030010">
    <property type="term" value="P:establishment of cell polarity"/>
    <property type="evidence" value="ECO:0000250"/>
    <property type="project" value="UniProtKB"/>
</dbReference>
<dbReference type="GO" id="GO:0060392">
    <property type="term" value="P:negative regulation of SMAD protein signal transduction"/>
    <property type="evidence" value="ECO:0000250"/>
    <property type="project" value="UniProtKB"/>
</dbReference>
<dbReference type="GO" id="GO:0030512">
    <property type="term" value="P:negative regulation of transforming growth factor beta receptor signaling pathway"/>
    <property type="evidence" value="ECO:0000250"/>
    <property type="project" value="UniProtKB"/>
</dbReference>
<dbReference type="GO" id="GO:0030335">
    <property type="term" value="P:positive regulation of cell migration"/>
    <property type="evidence" value="ECO:0000250"/>
    <property type="project" value="UniProtKB"/>
</dbReference>
<dbReference type="InterPro" id="IPR039499">
    <property type="entry name" value="LURA1/LRA25"/>
</dbReference>
<dbReference type="PANTHER" id="PTHR46949">
    <property type="entry name" value="LEUCINE REPEAT ADAPTER PROTEIN 25"/>
    <property type="match status" value="1"/>
</dbReference>
<dbReference type="PANTHER" id="PTHR46949:SF2">
    <property type="entry name" value="LEUCINE REPEAT ADAPTER PROTEIN 25"/>
    <property type="match status" value="1"/>
</dbReference>
<dbReference type="Pfam" id="PF14854">
    <property type="entry name" value="LURAP"/>
    <property type="match status" value="1"/>
</dbReference>
<name>LRA25_HUMAN</name>
<sequence length="189" mass="20147">MNGLPSAEAPGGAGCALAGLPPLPRGLSGLLNASGGSWRELERVYSQRSRIHDELSRAARAPDGPRHAAGAANAGPAAGPRRPVNLDSALAALRKEMVGLRQLDMSLLCQLWGLYESIQDYKHLCQDLSFCQDLSSSLHSDSSYPPDAGLSDDEEPPDASLPPDPPPLTVPQTHNARDQWLQDAFHISL</sequence>
<keyword id="KW-0025">Alternative splicing</keyword>
<keyword id="KW-0966">Cell projection</keyword>
<keyword id="KW-0963">Cytoplasm</keyword>
<keyword id="KW-0433">Leucine-rich repeat</keyword>
<keyword id="KW-0597">Phosphoprotein</keyword>
<keyword id="KW-1267">Proteomics identification</keyword>
<keyword id="KW-1185">Reference proteome</keyword>
<keyword id="KW-0677">Repeat</keyword>
<organism>
    <name type="scientific">Homo sapiens</name>
    <name type="common">Human</name>
    <dbReference type="NCBI Taxonomy" id="9606"/>
    <lineage>
        <taxon>Eukaryota</taxon>
        <taxon>Metazoa</taxon>
        <taxon>Chordata</taxon>
        <taxon>Craniata</taxon>
        <taxon>Vertebrata</taxon>
        <taxon>Euteleostomi</taxon>
        <taxon>Mammalia</taxon>
        <taxon>Eutheria</taxon>
        <taxon>Euarchontoglires</taxon>
        <taxon>Primates</taxon>
        <taxon>Haplorrhini</taxon>
        <taxon>Catarrhini</taxon>
        <taxon>Hominidae</taxon>
        <taxon>Homo</taxon>
    </lineage>
</organism>
<gene>
    <name type="primary">FAM89B</name>
    <name type="synonym">Lrap25</name>
</gene>
<evidence type="ECO:0000250" key="1">
    <source>
        <dbReference type="UniProtKB" id="Q566R4"/>
    </source>
</evidence>
<evidence type="ECO:0000250" key="2">
    <source>
        <dbReference type="UniProtKB" id="Q9QUI1"/>
    </source>
</evidence>
<evidence type="ECO:0000256" key="3">
    <source>
        <dbReference type="SAM" id="MobiDB-lite"/>
    </source>
</evidence>
<evidence type="ECO:0000303" key="4">
    <source>
    </source>
</evidence>
<evidence type="ECO:0000303" key="5">
    <source ref="1"/>
</evidence>
<evidence type="ECO:0000305" key="6"/>
<evidence type="ECO:0007744" key="7">
    <source>
    </source>
</evidence>
<evidence type="ECO:0007744" key="8">
    <source>
    </source>
</evidence>
<reference key="1">
    <citation type="submission" date="1998-03" db="EMBL/GenBank/DDBJ databases">
        <authorList>
            <person name="Yu W."/>
            <person name="Sarginson J."/>
            <person name="Gibbs R.A."/>
        </authorList>
    </citation>
    <scope>NUCLEOTIDE SEQUENCE [LARGE SCALE MRNA] (ISOFORM 4)</scope>
    <source>
        <tissue>Brain</tissue>
    </source>
</reference>
<reference key="2">
    <citation type="journal article" date="2006" name="Nature">
        <title>Human chromosome 11 DNA sequence and analysis including novel gene identification.</title>
        <authorList>
            <person name="Taylor T.D."/>
            <person name="Noguchi H."/>
            <person name="Totoki Y."/>
            <person name="Toyoda A."/>
            <person name="Kuroki Y."/>
            <person name="Dewar K."/>
            <person name="Lloyd C."/>
            <person name="Itoh T."/>
            <person name="Takeda T."/>
            <person name="Kim D.-W."/>
            <person name="She X."/>
            <person name="Barlow K.F."/>
            <person name="Bloom T."/>
            <person name="Bruford E."/>
            <person name="Chang J.L."/>
            <person name="Cuomo C.A."/>
            <person name="Eichler E."/>
            <person name="FitzGerald M.G."/>
            <person name="Jaffe D.B."/>
            <person name="LaButti K."/>
            <person name="Nicol R."/>
            <person name="Park H.-S."/>
            <person name="Seaman C."/>
            <person name="Sougnez C."/>
            <person name="Yang X."/>
            <person name="Zimmer A.R."/>
            <person name="Zody M.C."/>
            <person name="Birren B.W."/>
            <person name="Nusbaum C."/>
            <person name="Fujiyama A."/>
            <person name="Hattori M."/>
            <person name="Rogers J."/>
            <person name="Lander E.S."/>
            <person name="Sakaki Y."/>
        </authorList>
    </citation>
    <scope>NUCLEOTIDE SEQUENCE [LARGE SCALE GENOMIC DNA]</scope>
</reference>
<reference key="3">
    <citation type="journal article" date="2004" name="Genome Res.">
        <title>The status, quality, and expansion of the NIH full-length cDNA project: the Mammalian Gene Collection (MGC).</title>
        <authorList>
            <consortium name="The MGC Project Team"/>
        </authorList>
    </citation>
    <scope>NUCLEOTIDE SEQUENCE [LARGE SCALE MRNA] (ISOFORMS 1 AND 2)</scope>
    <scope>NUCLEOTIDE SEQUENCE [LARGE SCALE MRNA] OF 1-157 (ISOFORM 3)</scope>
    <source>
        <tissue>Cervix</tissue>
        <tissue>Lung</tissue>
        <tissue>Melanoma</tissue>
    </source>
</reference>
<reference key="4">
    <citation type="journal article" date="2010" name="Sci. Signal.">
        <title>Quantitative phosphoproteomics reveals widespread full phosphorylation site occupancy during mitosis.</title>
        <authorList>
            <person name="Olsen J.V."/>
            <person name="Vermeulen M."/>
            <person name="Santamaria A."/>
            <person name="Kumar C."/>
            <person name="Miller M.L."/>
            <person name="Jensen L.J."/>
            <person name="Gnad F."/>
            <person name="Cox J."/>
            <person name="Jensen T.S."/>
            <person name="Nigg E.A."/>
            <person name="Brunak S."/>
            <person name="Mann M."/>
        </authorList>
    </citation>
    <scope>PHOSPHORYLATION [LARGE SCALE ANALYSIS] AT SER-188</scope>
    <scope>IDENTIFICATION BY MASS SPECTROMETRY [LARGE SCALE ANALYSIS]</scope>
    <source>
        <tissue>Cervix carcinoma</tissue>
    </source>
</reference>
<reference key="5">
    <citation type="journal article" date="2014" name="J. Proteomics">
        <title>An enzyme assisted RP-RPLC approach for in-depth analysis of human liver phosphoproteome.</title>
        <authorList>
            <person name="Bian Y."/>
            <person name="Song C."/>
            <person name="Cheng K."/>
            <person name="Dong M."/>
            <person name="Wang F."/>
            <person name="Huang J."/>
            <person name="Sun D."/>
            <person name="Wang L."/>
            <person name="Ye M."/>
            <person name="Zou H."/>
        </authorList>
    </citation>
    <scope>PHOSPHORYLATION [LARGE SCALE ANALYSIS] AT SER-28</scope>
    <scope>IDENTIFICATION BY MASS SPECTROMETRY [LARGE SCALE ANALYSIS]</scope>
    <source>
        <tissue>Liver</tissue>
    </source>
</reference>
<comment type="function">
    <text evidence="2">Negatively regulates TGF-beta-induced signaling; in cooperation with SKI prevents the translocation of SMAD2 from the nucleus to the cytoplasm in response to TGF-beta. Acts as an adapter that mediates the specific recognition of LIMK1 by CDC42BPA and CDC42BPB in the lamellipodia. LRAP25-mediated CDC42BPA/CDC42BPB targeting to LIMK1 and the lamellipodium results in LIMK1 activation and the subsequent phosphorylation of CFL1 which is important for lamellipodial F-actin regulation.</text>
</comment>
<comment type="subunit">
    <text evidence="2">Interacts with SKI. Interacts (via LRR repeat) with CDC42BPA (via AGC-kinase C-terminal domain), CDC42BPB (via AGC-kinase C-terminal domain) and LIMK1 (via LIM zinc-binding domains). Forms a tripartite complex with CDC42BPA, CDC42BPB and LIMK1.</text>
</comment>
<comment type="subcellular location">
    <molecule>Isoform 3</molecule>
    <subcellularLocation>
        <location evidence="2">Cytoplasm</location>
    </subcellularLocation>
    <subcellularLocation>
        <location evidence="2">Cell projection</location>
        <location evidence="2">Lamellipodium</location>
    </subcellularLocation>
    <text evidence="2">Co-localizes with CDC42BPA, CDC42BPB and LIMK1 in the lamellipodium.</text>
</comment>
<comment type="alternative products">
    <event type="alternative splicing"/>
    <isoform>
        <id>Q8N5H3-3</id>
        <name>3</name>
        <sequence type="displayed"/>
    </isoform>
    <isoform>
        <id>Q8N5H3-1</id>
        <name>1</name>
        <sequence type="described" ref="VSP_045015"/>
    </isoform>
    <isoform>
        <id>Q8N5H3-2</id>
        <name>2</name>
        <sequence type="described" ref="VSP_045016"/>
    </isoform>
    <isoform>
        <id>Q8N5H3-4</id>
        <name>4</name>
        <sequence type="described" ref="VSP_045631 VSP_045632"/>
    </isoform>
</comment>
<comment type="similarity">
    <text evidence="6">Belongs to the FAM89 family.</text>
</comment>
<accession>Q8N5H3</accession>
<accession>E9PB01</accession>
<accession>E9PL72</accession>
<accession>Q6PJ27</accession>
<feature type="chain" id="PRO_0000271763" description="Leucine repeat adapter protein 25">
    <location>
        <begin position="1"/>
        <end position="189"/>
    </location>
</feature>
<feature type="repeat" description="LRR" evidence="1">
    <location>
        <begin position="86"/>
        <end position="114"/>
    </location>
</feature>
<feature type="region of interest" description="Disordered" evidence="3">
    <location>
        <begin position="54"/>
        <end position="83"/>
    </location>
</feature>
<feature type="region of interest" description="Disordered" evidence="3">
    <location>
        <begin position="141"/>
        <end position="175"/>
    </location>
</feature>
<feature type="compositionally biased region" description="Low complexity" evidence="3">
    <location>
        <begin position="67"/>
        <end position="83"/>
    </location>
</feature>
<feature type="compositionally biased region" description="Pro residues" evidence="3">
    <location>
        <begin position="159"/>
        <end position="169"/>
    </location>
</feature>
<feature type="modified residue" description="Phosphoserine" evidence="8">
    <location>
        <position position="28"/>
    </location>
</feature>
<feature type="modified residue" description="Phosphoserine" evidence="7">
    <location>
        <position position="188"/>
    </location>
</feature>
<feature type="splice variant" id="VSP_045016" description="In isoform 2." evidence="4">
    <original>IHDELSRAARAPDGPRHAAGAANAGPAAGPRRPVNLDSALAALRKEM</original>
    <variation>VVLSTSTQRWPRCARRCCLQ</variation>
    <location>
        <begin position="51"/>
        <end position="97"/>
    </location>
</feature>
<feature type="splice variant" id="VSP_045631" description="In isoform 4." evidence="5">
    <original>VGLRQLDMSLLCQLWGLYESIQDYKHLCQDLSFCQDLSSSLHSDSSYPPDAGLSDDE</original>
    <variation>LSAGGAAAVGHVLVVPAVGPVRVNPGLQTPVPRPELLPGPVILPPFGQLLPTGCGPV</variation>
    <location>
        <begin position="98"/>
        <end position="154"/>
    </location>
</feature>
<feature type="splice variant" id="VSP_045015" description="In isoform 1." evidence="4">
    <location>
        <begin position="98"/>
        <end position="110"/>
    </location>
</feature>
<feature type="splice variant" id="VSP_045632" description="In isoform 4." evidence="5">
    <location>
        <begin position="155"/>
        <end position="189"/>
    </location>
</feature>
<protein>
    <recommendedName>
        <fullName>Leucine repeat adapter protein 25</fullName>
    </recommendedName>
</protein>
<proteinExistence type="evidence at protein level"/>